<protein>
    <recommendedName>
        <fullName>Histone H2B</fullName>
    </recommendedName>
</protein>
<proteinExistence type="inferred from homology"/>
<organism>
    <name type="scientific">Drosophila orena</name>
    <name type="common">Fruit fly</name>
    <dbReference type="NCBI Taxonomy" id="7233"/>
    <lineage>
        <taxon>Eukaryota</taxon>
        <taxon>Metazoa</taxon>
        <taxon>Ecdysozoa</taxon>
        <taxon>Arthropoda</taxon>
        <taxon>Hexapoda</taxon>
        <taxon>Insecta</taxon>
        <taxon>Pterygota</taxon>
        <taxon>Neoptera</taxon>
        <taxon>Endopterygota</taxon>
        <taxon>Diptera</taxon>
        <taxon>Brachycera</taxon>
        <taxon>Muscomorpha</taxon>
        <taxon>Ephydroidea</taxon>
        <taxon>Drosophilidae</taxon>
        <taxon>Drosophila</taxon>
        <taxon>Sophophora</taxon>
    </lineage>
</organism>
<evidence type="ECO:0000250" key="1"/>
<evidence type="ECO:0000250" key="2">
    <source>
        <dbReference type="UniProtKB" id="P02283"/>
    </source>
</evidence>
<evidence type="ECO:0000256" key="3">
    <source>
        <dbReference type="SAM" id="MobiDB-lite"/>
    </source>
</evidence>
<evidence type="ECO:0000305" key="4"/>
<reference key="1">
    <citation type="journal article" date="2003" name="Genes Genet. Syst.">
        <title>Divergence and heterogeneity of the histone gene repeating units in the Drosophila melanogaster species subgroup.</title>
        <authorList>
            <person name="Kakita M."/>
            <person name="Shimizu T."/>
            <person name="Emoto M."/>
            <person name="Nagai M."/>
            <person name="Takeguchi M."/>
            <person name="Hosono Y."/>
            <person name="Kume N."/>
            <person name="Ozawa T."/>
            <person name="Ueda M."/>
            <person name="Bhuiyan M.S."/>
            <person name="Matsuo Y."/>
        </authorList>
    </citation>
    <scope>NUCLEOTIDE SEQUENCE [GENOMIC DNA]</scope>
</reference>
<gene>
    <name type="primary">His2B</name>
</gene>
<comment type="function">
    <text>Core component of nucleosome. Nucleosomes wrap and compact DNA into chromatin, limiting DNA accessibility to the cellular machineries which require DNA as a template. Histones thereby play a central role in transcription regulation, DNA repair, DNA replication and chromosomal stability. DNA accessibility is regulated via a complex set of post-translational modifications of histones, also called histone code, and nucleosome remodeling.</text>
</comment>
<comment type="subunit">
    <text>The nucleosome is a histone octamer containing two molecules each of H2A, H2B, H3 and H4 assembled in one H3-H4 heterotetramer and two H2A-H2B heterodimers. The octamer wraps approximately 147 bp of DNA.</text>
</comment>
<comment type="subcellular location">
    <subcellularLocation>
        <location>Nucleus</location>
    </subcellularLocation>
    <subcellularLocation>
        <location>Chromosome</location>
    </subcellularLocation>
</comment>
<comment type="PTM">
    <text evidence="2">Phosphorylated by the catalytic component of the Dbf4-dependent kinase (DDK) complex Cdc7.</text>
</comment>
<comment type="PTM">
    <text evidence="2">Monoubiquitination of Lys-118 by Bre1 gives a specific tag for epigenetic transcriptional activation and is also prerequisite for histone H3 'Lys-4' and 'Lys-79' methylation (By similarity). Deubiquitination of Lys-118 by the SAGA complex is involved in activating transcription of a large subset of genes (By similarity).</text>
</comment>
<comment type="PTM">
    <text evidence="2">Methylation at Pro-2 increases upon heat shock.</text>
</comment>
<comment type="PTM">
    <text evidence="2">GlcNAcylation at Ser-110 promotes monoubiquitination of Lys-118. It fluctuates in response to extracellular glucose, and associates with transcribed genes.</text>
</comment>
<comment type="similarity">
    <text evidence="4">Belongs to the histone H2B family.</text>
</comment>
<name>H2B_DROOR</name>
<dbReference type="EMBL" id="AB105181">
    <property type="protein sequence ID" value="BAD02430.1"/>
    <property type="molecule type" value="Genomic_DNA"/>
</dbReference>
<dbReference type="SMR" id="Q76FE9"/>
<dbReference type="GlyCosmos" id="Q76FE9">
    <property type="glycosylation" value="1 site, No reported glycans"/>
</dbReference>
<dbReference type="GO" id="GO:0000786">
    <property type="term" value="C:nucleosome"/>
    <property type="evidence" value="ECO:0007669"/>
    <property type="project" value="UniProtKB-KW"/>
</dbReference>
<dbReference type="GO" id="GO:0005634">
    <property type="term" value="C:nucleus"/>
    <property type="evidence" value="ECO:0007669"/>
    <property type="project" value="UniProtKB-SubCell"/>
</dbReference>
<dbReference type="GO" id="GO:0003677">
    <property type="term" value="F:DNA binding"/>
    <property type="evidence" value="ECO:0007669"/>
    <property type="project" value="UniProtKB-KW"/>
</dbReference>
<dbReference type="GO" id="GO:0046982">
    <property type="term" value="F:protein heterodimerization activity"/>
    <property type="evidence" value="ECO:0007669"/>
    <property type="project" value="InterPro"/>
</dbReference>
<dbReference type="GO" id="GO:0044877">
    <property type="term" value="F:protein-containing complex binding"/>
    <property type="evidence" value="ECO:0000250"/>
    <property type="project" value="UniProtKB"/>
</dbReference>
<dbReference type="GO" id="GO:0030527">
    <property type="term" value="F:structural constituent of chromatin"/>
    <property type="evidence" value="ECO:0007669"/>
    <property type="project" value="InterPro"/>
</dbReference>
<dbReference type="CDD" id="cd22910">
    <property type="entry name" value="HFD_H2B"/>
    <property type="match status" value="1"/>
</dbReference>
<dbReference type="FunFam" id="1.10.20.10:FF:000016">
    <property type="entry name" value="Histone H2B"/>
    <property type="match status" value="1"/>
</dbReference>
<dbReference type="Gene3D" id="1.10.20.10">
    <property type="entry name" value="Histone, subunit A"/>
    <property type="match status" value="1"/>
</dbReference>
<dbReference type="InterPro" id="IPR009072">
    <property type="entry name" value="Histone-fold"/>
</dbReference>
<dbReference type="InterPro" id="IPR007125">
    <property type="entry name" value="Histone_H2A/H2B/H3"/>
</dbReference>
<dbReference type="InterPro" id="IPR000558">
    <property type="entry name" value="Histone_H2B"/>
</dbReference>
<dbReference type="InterPro" id="IPR055333">
    <property type="entry name" value="HISTONE_H2B_site"/>
</dbReference>
<dbReference type="PANTHER" id="PTHR23428">
    <property type="entry name" value="HISTONE H2B"/>
    <property type="match status" value="1"/>
</dbReference>
<dbReference type="Pfam" id="PF00125">
    <property type="entry name" value="Histone"/>
    <property type="match status" value="1"/>
</dbReference>
<dbReference type="PRINTS" id="PR00621">
    <property type="entry name" value="HISTONEH2B"/>
</dbReference>
<dbReference type="SMART" id="SM00427">
    <property type="entry name" value="H2B"/>
    <property type="match status" value="1"/>
</dbReference>
<dbReference type="SUPFAM" id="SSF47113">
    <property type="entry name" value="Histone-fold"/>
    <property type="match status" value="1"/>
</dbReference>
<dbReference type="PROSITE" id="PS00357">
    <property type="entry name" value="HISTONE_H2B"/>
    <property type="match status" value="1"/>
</dbReference>
<keyword id="KW-0158">Chromosome</keyword>
<keyword id="KW-0238">DNA-binding</keyword>
<keyword id="KW-0325">Glycoprotein</keyword>
<keyword id="KW-1017">Isopeptide bond</keyword>
<keyword id="KW-0488">Methylation</keyword>
<keyword id="KW-0544">Nucleosome core</keyword>
<keyword id="KW-0539">Nucleus</keyword>
<keyword id="KW-0832">Ubl conjugation</keyword>
<accession>Q76FE9</accession>
<sequence length="123" mass="13696">MPPKTSGKAAKKAGKAQKNITKTDKKKKRKRKESYAIYIYKVLKQVHPDTGISSKAMSIMNSFVNDIFERIAAEASRLAHYNKRSTITSREIQTAVRLLLPGELAKHAVSEGTKAVTKYTSSK</sequence>
<feature type="initiator methionine" description="Removed" evidence="1">
    <location>
        <position position="1"/>
    </location>
</feature>
<feature type="chain" id="PRO_0000071862" description="Histone H2B">
    <location>
        <begin position="2"/>
        <end position="123"/>
    </location>
</feature>
<feature type="region of interest" description="Disordered" evidence="3">
    <location>
        <begin position="1"/>
        <end position="30"/>
    </location>
</feature>
<feature type="modified residue" description="N-methylproline; partial" evidence="2">
    <location>
        <position position="2"/>
    </location>
</feature>
<feature type="modified residue" description="N6-succinyllysine" evidence="2">
    <location>
        <position position="44"/>
    </location>
</feature>
<feature type="modified residue" description="N6-succinyllysine" evidence="2">
    <location>
        <position position="114"/>
    </location>
</feature>
<feature type="modified residue" description="N6-succinyllysine" evidence="2">
    <location>
        <position position="118"/>
    </location>
</feature>
<feature type="glycosylation site" description="O-linked (GlcNAc) serine" evidence="1">
    <location>
        <position position="110"/>
    </location>
</feature>
<feature type="cross-link" description="Glycyl lysine isopeptide (Lys-Gly) (interchain with G-Cter in ubiquitin)" evidence="2">
    <location>
        <position position="118"/>
    </location>
</feature>